<reference key="1">
    <citation type="journal article" date="2006" name="PLoS Genet.">
        <title>The complete genome sequence and comparative genome analysis of the high pathogenicity Yersinia enterocolitica strain 8081.</title>
        <authorList>
            <person name="Thomson N.R."/>
            <person name="Howard S."/>
            <person name="Wren B.W."/>
            <person name="Holden M.T.G."/>
            <person name="Crossman L."/>
            <person name="Challis G.L."/>
            <person name="Churcher C."/>
            <person name="Mungall K."/>
            <person name="Brooks K."/>
            <person name="Chillingworth T."/>
            <person name="Feltwell T."/>
            <person name="Abdellah Z."/>
            <person name="Hauser H."/>
            <person name="Jagels K."/>
            <person name="Maddison M."/>
            <person name="Moule S."/>
            <person name="Sanders M."/>
            <person name="Whitehead S."/>
            <person name="Quail M.A."/>
            <person name="Dougan G."/>
            <person name="Parkhill J."/>
            <person name="Prentice M.B."/>
        </authorList>
    </citation>
    <scope>NUCLEOTIDE SEQUENCE [LARGE SCALE GENOMIC DNA]</scope>
    <source>
        <strain>NCTC 13174 / 8081</strain>
    </source>
</reference>
<organism>
    <name type="scientific">Yersinia enterocolitica serotype O:8 / biotype 1B (strain NCTC 13174 / 8081)</name>
    <dbReference type="NCBI Taxonomy" id="393305"/>
    <lineage>
        <taxon>Bacteria</taxon>
        <taxon>Pseudomonadati</taxon>
        <taxon>Pseudomonadota</taxon>
        <taxon>Gammaproteobacteria</taxon>
        <taxon>Enterobacterales</taxon>
        <taxon>Yersiniaceae</taxon>
        <taxon>Yersinia</taxon>
    </lineage>
</organism>
<accession>A1JRB1</accession>
<sequence length="90" mass="10202">MLCAIYRSPKRDQTYLYIEKKDDFSRVPAELLASFGKPQFAMLLSLNERKSLATADIEKVKSALVEQGFYLQVPPPPESLLKMHLGETKA</sequence>
<gene>
    <name type="ordered locus">YE2368</name>
</gene>
<proteinExistence type="inferred from homology"/>
<evidence type="ECO:0000255" key="1">
    <source>
        <dbReference type="HAMAP-Rule" id="MF_01866"/>
    </source>
</evidence>
<protein>
    <recommendedName>
        <fullName evidence="1">YcgL domain-containing protein YE2368</fullName>
    </recommendedName>
</protein>
<feature type="chain" id="PRO_0000375410" description="YcgL domain-containing protein YE2368">
    <location>
        <begin position="1"/>
        <end position="90"/>
    </location>
</feature>
<feature type="domain" description="YcgL" evidence="1">
    <location>
        <begin position="1"/>
        <end position="85"/>
    </location>
</feature>
<dbReference type="EMBL" id="AM286415">
    <property type="protein sequence ID" value="CAL12421.1"/>
    <property type="molecule type" value="Genomic_DNA"/>
</dbReference>
<dbReference type="RefSeq" id="WP_005162995.1">
    <property type="nucleotide sequence ID" value="NC_008800.1"/>
</dbReference>
<dbReference type="RefSeq" id="YP_001006588.1">
    <property type="nucleotide sequence ID" value="NC_008800.1"/>
</dbReference>
<dbReference type="SMR" id="A1JRB1"/>
<dbReference type="KEGG" id="yen:YE2368"/>
<dbReference type="PATRIC" id="fig|393305.7.peg.2523"/>
<dbReference type="eggNOG" id="COG3100">
    <property type="taxonomic scope" value="Bacteria"/>
</dbReference>
<dbReference type="HOGENOM" id="CLU_155118_1_0_6"/>
<dbReference type="OrthoDB" id="7062382at2"/>
<dbReference type="Proteomes" id="UP000000642">
    <property type="component" value="Chromosome"/>
</dbReference>
<dbReference type="Gene3D" id="3.10.510.20">
    <property type="entry name" value="YcgL domain"/>
    <property type="match status" value="1"/>
</dbReference>
<dbReference type="HAMAP" id="MF_01866">
    <property type="entry name" value="UPF0745"/>
    <property type="match status" value="1"/>
</dbReference>
<dbReference type="InterPro" id="IPR038068">
    <property type="entry name" value="YcgL-like_sf"/>
</dbReference>
<dbReference type="InterPro" id="IPR027354">
    <property type="entry name" value="YcgL_dom"/>
</dbReference>
<dbReference type="PANTHER" id="PTHR38109">
    <property type="entry name" value="PROTEIN YCGL"/>
    <property type="match status" value="1"/>
</dbReference>
<dbReference type="PANTHER" id="PTHR38109:SF1">
    <property type="entry name" value="PROTEIN YCGL"/>
    <property type="match status" value="1"/>
</dbReference>
<dbReference type="Pfam" id="PF05166">
    <property type="entry name" value="YcgL"/>
    <property type="match status" value="1"/>
</dbReference>
<dbReference type="SUPFAM" id="SSF160191">
    <property type="entry name" value="YcgL-like"/>
    <property type="match status" value="1"/>
</dbReference>
<dbReference type="PROSITE" id="PS51648">
    <property type="entry name" value="YCGL"/>
    <property type="match status" value="1"/>
</dbReference>
<name>Y2368_YERE8</name>